<proteinExistence type="evidence at protein level"/>
<dbReference type="EC" id="1.1.1.47" evidence="4"/>
<dbReference type="EC" id="1.1.1.363" evidence="4"/>
<dbReference type="EC" id="3.1.1.31" evidence="4"/>
<dbReference type="EMBL" id="AAGW02064328">
    <property type="status" value="NOT_ANNOTATED_CDS"/>
    <property type="molecule type" value="Genomic_DNA"/>
</dbReference>
<dbReference type="RefSeq" id="XP_008264185.1">
    <property type="nucleotide sequence ID" value="XM_008265963.2"/>
</dbReference>
<dbReference type="SMR" id="P56201"/>
<dbReference type="FunCoup" id="P56201">
    <property type="interactions" value="659"/>
</dbReference>
<dbReference type="STRING" id="9986.ENSOCUP00000000694"/>
<dbReference type="GlyCosmos" id="P56201">
    <property type="glycosylation" value="3 sites, No reported glycans"/>
</dbReference>
<dbReference type="PaxDb" id="9986-ENSOCUP00000000694"/>
<dbReference type="GeneID" id="100357500"/>
<dbReference type="KEGG" id="ocu:100357500"/>
<dbReference type="CTD" id="9563"/>
<dbReference type="eggNOG" id="KOG0563">
    <property type="taxonomic scope" value="Eukaryota"/>
</dbReference>
<dbReference type="eggNOG" id="KOG3147">
    <property type="taxonomic scope" value="Eukaryota"/>
</dbReference>
<dbReference type="HOGENOM" id="CLU_018975_0_0_1"/>
<dbReference type="InParanoid" id="P56201"/>
<dbReference type="OMA" id="APNRCAV"/>
<dbReference type="OrthoDB" id="60984at2759"/>
<dbReference type="TreeFam" id="TF354247"/>
<dbReference type="UniPathway" id="UPA00115">
    <property type="reaction ID" value="UER00409"/>
</dbReference>
<dbReference type="Proteomes" id="UP000001811">
    <property type="component" value="Unplaced"/>
</dbReference>
<dbReference type="GO" id="GO:0005788">
    <property type="term" value="C:endoplasmic reticulum lumen"/>
    <property type="evidence" value="ECO:0000250"/>
    <property type="project" value="UniProtKB"/>
</dbReference>
<dbReference type="GO" id="GO:0017057">
    <property type="term" value="F:6-phosphogluconolactonase activity"/>
    <property type="evidence" value="ECO:0000250"/>
    <property type="project" value="UniProtKB"/>
</dbReference>
<dbReference type="GO" id="GO:0047934">
    <property type="term" value="F:glucose 1-dehydrogenase (NAD+) activity"/>
    <property type="evidence" value="ECO:0007669"/>
    <property type="project" value="RHEA"/>
</dbReference>
<dbReference type="GO" id="GO:0047935">
    <property type="term" value="F:glucose 1-dehydrogenase (NADP+) activity"/>
    <property type="evidence" value="ECO:0007669"/>
    <property type="project" value="RHEA"/>
</dbReference>
<dbReference type="GO" id="GO:0004345">
    <property type="term" value="F:glucose-6-phosphate dehydrogenase activity"/>
    <property type="evidence" value="ECO:0000250"/>
    <property type="project" value="UniProtKB"/>
</dbReference>
<dbReference type="GO" id="GO:0050661">
    <property type="term" value="F:NADP binding"/>
    <property type="evidence" value="ECO:0007669"/>
    <property type="project" value="InterPro"/>
</dbReference>
<dbReference type="GO" id="GO:0006006">
    <property type="term" value="P:glucose metabolic process"/>
    <property type="evidence" value="ECO:0007669"/>
    <property type="project" value="UniProtKB-KW"/>
</dbReference>
<dbReference type="GO" id="GO:0009051">
    <property type="term" value="P:pentose-phosphate shunt, oxidative branch"/>
    <property type="evidence" value="ECO:0000250"/>
    <property type="project" value="UniProtKB"/>
</dbReference>
<dbReference type="CDD" id="cd01400">
    <property type="entry name" value="6PGL"/>
    <property type="match status" value="1"/>
</dbReference>
<dbReference type="FunFam" id="3.40.50.1360:FF:000015">
    <property type="entry name" value="Hexose-6-phosphate dehydrogenase/glucose 1-dehydrogenase"/>
    <property type="match status" value="1"/>
</dbReference>
<dbReference type="Gene3D" id="3.40.50.1360">
    <property type="match status" value="1"/>
</dbReference>
<dbReference type="Gene3D" id="3.30.360.10">
    <property type="entry name" value="Dihydrodipicolinate Reductase, domain 2"/>
    <property type="match status" value="1"/>
</dbReference>
<dbReference type="Gene3D" id="3.40.50.720">
    <property type="entry name" value="NAD(P)-binding Rossmann-like Domain"/>
    <property type="match status" value="1"/>
</dbReference>
<dbReference type="InterPro" id="IPR005900">
    <property type="entry name" value="6-phosphogluconolactonase_DevB"/>
</dbReference>
<dbReference type="InterPro" id="IPR001282">
    <property type="entry name" value="G6P_DH"/>
</dbReference>
<dbReference type="InterPro" id="IPR019796">
    <property type="entry name" value="G6P_DH_AS"/>
</dbReference>
<dbReference type="InterPro" id="IPR022675">
    <property type="entry name" value="G6P_DH_C"/>
</dbReference>
<dbReference type="InterPro" id="IPR022674">
    <property type="entry name" value="G6P_DH_NAD-bd"/>
</dbReference>
<dbReference type="InterPro" id="IPR006148">
    <property type="entry name" value="Glc/Gal-6P_isomerase"/>
</dbReference>
<dbReference type="InterPro" id="IPR036291">
    <property type="entry name" value="NAD(P)-bd_dom_sf"/>
</dbReference>
<dbReference type="InterPro" id="IPR037171">
    <property type="entry name" value="NagB/RpiA_transferase-like"/>
</dbReference>
<dbReference type="NCBIfam" id="TIGR01198">
    <property type="entry name" value="pgl"/>
    <property type="match status" value="1"/>
</dbReference>
<dbReference type="PANTHER" id="PTHR23429:SF7">
    <property type="entry name" value="GDH_6PGL ENDOPLASMIC BIFUNCTIONAL PROTEIN"/>
    <property type="match status" value="1"/>
</dbReference>
<dbReference type="PANTHER" id="PTHR23429">
    <property type="entry name" value="GLUCOSE-6-PHOSPHATE 1-DEHYDROGENASE G6PD"/>
    <property type="match status" value="1"/>
</dbReference>
<dbReference type="Pfam" id="PF02781">
    <property type="entry name" value="G6PD_C"/>
    <property type="match status" value="1"/>
</dbReference>
<dbReference type="Pfam" id="PF00479">
    <property type="entry name" value="G6PD_N"/>
    <property type="match status" value="1"/>
</dbReference>
<dbReference type="Pfam" id="PF01182">
    <property type="entry name" value="Glucosamine_iso"/>
    <property type="match status" value="1"/>
</dbReference>
<dbReference type="PRINTS" id="PR00079">
    <property type="entry name" value="G6PDHDRGNASE"/>
</dbReference>
<dbReference type="SUPFAM" id="SSF55347">
    <property type="entry name" value="Glyceraldehyde-3-phosphate dehydrogenase-like, C-terminal domain"/>
    <property type="match status" value="1"/>
</dbReference>
<dbReference type="SUPFAM" id="SSF51735">
    <property type="entry name" value="NAD(P)-binding Rossmann-fold domains"/>
    <property type="match status" value="1"/>
</dbReference>
<dbReference type="SUPFAM" id="SSF100950">
    <property type="entry name" value="NagB/RpiA/CoA transferase-like"/>
    <property type="match status" value="1"/>
</dbReference>
<dbReference type="PROSITE" id="PS00069">
    <property type="entry name" value="G6P_DEHYDROGENASE"/>
    <property type="match status" value="1"/>
</dbReference>
<organism>
    <name type="scientific">Oryctolagus cuniculus</name>
    <name type="common">Rabbit</name>
    <dbReference type="NCBI Taxonomy" id="9986"/>
    <lineage>
        <taxon>Eukaryota</taxon>
        <taxon>Metazoa</taxon>
        <taxon>Chordata</taxon>
        <taxon>Craniata</taxon>
        <taxon>Vertebrata</taxon>
        <taxon>Euteleostomi</taxon>
        <taxon>Mammalia</taxon>
        <taxon>Eutheria</taxon>
        <taxon>Euarchontoglires</taxon>
        <taxon>Glires</taxon>
        <taxon>Lagomorpha</taxon>
        <taxon>Leporidae</taxon>
        <taxon>Oryctolagus</taxon>
    </lineage>
</organism>
<sequence>MKCPGVWGMLTVTMCVVFLGCPQAQELQGHVSVILLGATGDLAKKYLWQGLFQLFLDEAGKGHSFSFHGAALTAPKQGQELMAKALESLSCPRDMAPSRCAELQAQFLRLSRYRQLKTAEDYQALGRDIEAQVQQEGLREAGRMFYFSVPPFAYADIARNINSSCRPGPGAWLRVVLEKPFGHDHLSAQQLATELGSFFQEEEMYRVDHYLGKQAVAQILPFRDQNRRALDSLWNRHHVERVEIIMKETVDAEGRTSFYEEYGVIRDTLQNHLTEILTLVAMELPANVSCSEAVLRHKLQAFRALRRLQRGSAVVGQYQTYSEQVRRELRKPAGSPSLTPTFAGVLVHVDNLRWEGVPFILMSGKALDERVGYVRVLFKNQAFCAQSEKHWAPAQSRCLPRQIIFYIGHGELGHPAVLVSRNLFRPFLPAQSWREVEDRPGLQLFGRPLSDFYAFSPVKERDAYSILLSHIFHARKESFVPTEHLLASWVFWTPLLESLAREVPRLYPGGADSGRLLDFEFSGSHLSFSLGQPEQLVPGPGSTPRPSDFQVLGAKYRESPLISAWPDELISKLASDIEAAAVQAVRRVGTFHLALSGGSSPIALFQQLASGHYGFPWAHTHLWLVDERCVPLSDPESNFQGLQAHLLQHVRVPYYNIHPMPVNLHQRLCAEEDRGAQAYASEISALVTNCSFDLVLLGMGTDGHTASLFPQSPTGLDGEQLVVLTESPSRPHQRMSLSLPLINRAKKVAVLVMGRTKRDITLLVSRVGREPKKWPISGVLPTSGQLVWYMDYEAFLG</sequence>
<name>G6PE_RABIT</name>
<evidence type="ECO:0000250" key="1">
    <source>
        <dbReference type="UniProtKB" id="O95479"/>
    </source>
</evidence>
<evidence type="ECO:0000250" key="2">
    <source>
        <dbReference type="UniProtKB" id="P11411"/>
    </source>
</evidence>
<evidence type="ECO:0000250" key="3">
    <source>
        <dbReference type="UniProtKB" id="P11413"/>
    </source>
</evidence>
<evidence type="ECO:0000250" key="4">
    <source>
        <dbReference type="UniProtKB" id="Q8CFX1"/>
    </source>
</evidence>
<evidence type="ECO:0000255" key="5"/>
<evidence type="ECO:0000269" key="6">
    <source>
    </source>
</evidence>
<evidence type="ECO:0000303" key="7">
    <source>
    </source>
</evidence>
<evidence type="ECO:0000305" key="8"/>
<protein>
    <recommendedName>
        <fullName evidence="4">GDH/6PGL endoplasmic bifunctional protein</fullName>
    </recommendedName>
    <domain>
        <recommendedName>
            <fullName evidence="4">Hexose-6-phosphate dehydrogenase</fullName>
        </recommendedName>
        <alternativeName>
            <fullName evidence="4">Glucose 1-dehydrogenase</fullName>
            <ecNumber evidence="4">1.1.1.47</ecNumber>
        </alternativeName>
        <alternativeName>
            <fullName evidence="7">Glucose-6-phosphate dehydrogenase</fullName>
            <ecNumber evidence="4">1.1.1.363</ecNumber>
        </alternativeName>
    </domain>
    <domain>
        <recommendedName>
            <fullName evidence="4">6-phosphogluconolactonase</fullName>
            <shortName evidence="4">6PGL</shortName>
            <ecNumber evidence="4">3.1.1.31</ecNumber>
        </recommendedName>
    </domain>
</protein>
<reference key="1">
    <citation type="journal article" date="2011" name="Nature">
        <title>A high-resolution map of human evolutionary constraint using 29 mammals.</title>
        <authorList>
            <person name="Lindblad-Toh K."/>
            <person name="Garber M."/>
            <person name="Zuk O."/>
            <person name="Lin M.F."/>
            <person name="Parker B.J."/>
            <person name="Washietl S."/>
            <person name="Kheradpour P."/>
            <person name="Ernst J."/>
            <person name="Jordan G."/>
            <person name="Mauceli E."/>
            <person name="Ward L.D."/>
            <person name="Lowe C.B."/>
            <person name="Holloway A.K."/>
            <person name="Clamp M."/>
            <person name="Gnerre S."/>
            <person name="Alfoldi J."/>
            <person name="Beal K."/>
            <person name="Chang J."/>
            <person name="Clawson H."/>
            <person name="Cuff J."/>
            <person name="Di Palma F."/>
            <person name="Fitzgerald S."/>
            <person name="Flicek P."/>
            <person name="Guttman M."/>
            <person name="Hubisz M.J."/>
            <person name="Jaffe D.B."/>
            <person name="Jungreis I."/>
            <person name="Kent W.J."/>
            <person name="Kostka D."/>
            <person name="Lara M."/>
            <person name="Martins A.L."/>
            <person name="Massingham T."/>
            <person name="Moltke I."/>
            <person name="Raney B.J."/>
            <person name="Rasmussen M.D."/>
            <person name="Robinson J."/>
            <person name="Stark A."/>
            <person name="Vilella A.J."/>
            <person name="Wen J."/>
            <person name="Xie X."/>
            <person name="Zody M.C."/>
            <person name="Baldwin J."/>
            <person name="Bloom T."/>
            <person name="Chin C.W."/>
            <person name="Heiman D."/>
            <person name="Nicol R."/>
            <person name="Nusbaum C."/>
            <person name="Young S."/>
            <person name="Wilkinson J."/>
            <person name="Worley K.C."/>
            <person name="Kovar C.L."/>
            <person name="Muzny D.M."/>
            <person name="Gibbs R.A."/>
            <person name="Cree A."/>
            <person name="Dihn H.H."/>
            <person name="Fowler G."/>
            <person name="Jhangiani S."/>
            <person name="Joshi V."/>
            <person name="Lee S."/>
            <person name="Lewis L.R."/>
            <person name="Nazareth L.V."/>
            <person name="Okwuonu G."/>
            <person name="Santibanez J."/>
            <person name="Warren W.C."/>
            <person name="Mardis E.R."/>
            <person name="Weinstock G.M."/>
            <person name="Wilson R.K."/>
            <person name="Delehaunty K."/>
            <person name="Dooling D."/>
            <person name="Fronik C."/>
            <person name="Fulton L."/>
            <person name="Fulton B."/>
            <person name="Graves T."/>
            <person name="Minx P."/>
            <person name="Sodergren E."/>
            <person name="Birney E."/>
            <person name="Margulies E.H."/>
            <person name="Herrero J."/>
            <person name="Green E.D."/>
            <person name="Haussler D."/>
            <person name="Siepel A."/>
            <person name="Goldman N."/>
            <person name="Pollard K.S."/>
            <person name="Pedersen J.S."/>
            <person name="Lander E.S."/>
            <person name="Kellis M."/>
        </authorList>
    </citation>
    <scope>NUCLEOTIDE SEQUENCE [LARGE SCALE GENOMIC DNA]</scope>
    <source>
        <strain>Thorbecke</strain>
    </source>
</reference>
<reference key="2">
    <citation type="journal article" date="1993" name="Proc. Natl. Acad. Sci. U.S.A.">
        <title>Isolation and the complete amino acid sequence of lumenal endoplasmic reticulum glucose-6-phosphate dehydrogenase.</title>
        <authorList>
            <person name="Ozols J."/>
        </authorList>
    </citation>
    <scope>PARTIAL PROTEIN SEQUENCE</scope>
    <scope>PYROGLUTAMATE FORMATION AT GLN-25</scope>
    <source>
        <strain>New Zealand white</strain>
        <tissue>Liver</tissue>
    </source>
</reference>
<comment type="function">
    <text evidence="4">Bifunctional enzyme localized in the lumen of the endoplasmic reticulum that catalyzes the first two steps of the oxidative branch of the pentose phosphate pathway/shunt, an alternative to glycolysis and a major source of reducing power and metabolic intermediates for biosynthetic processes. Has a hexose-6-phosphate dehydrogenase activity, with broad substrate specificity compared to glucose-6-phosphate 1-dehydrogenase/G6PD, and catalyzes the first step of the pentose phosphate pathway. In addition, acts as a 6-phosphogluconolactonase and catalyzes the second step of the pentose phosphate pathway. May have a dehydrogenase activity for alternative substrates including glucosamine 6-phosphate and glucose 6-sulfate. The main function of this enzyme is to provide reducing equivalents such as NADPH to maintain the adequate levels of reductive cofactors in the oxidizing environment of the endoplasmic reticulum. By producing NADPH that is needed by reductases of the lumen of the endoplasmic reticulum like corticosteroid 11-beta-dehydrogenase isozyme 1/HSD11B1, indirectly regulates their activity.</text>
</comment>
<comment type="catalytic activity">
    <reaction evidence="4">
        <text>D-glucose 6-phosphate + NAD(+) = 6-phospho-D-glucono-1,5-lactone + NADH + H(+)</text>
        <dbReference type="Rhea" id="RHEA:38215"/>
        <dbReference type="ChEBI" id="CHEBI:15378"/>
        <dbReference type="ChEBI" id="CHEBI:57540"/>
        <dbReference type="ChEBI" id="CHEBI:57945"/>
        <dbReference type="ChEBI" id="CHEBI:57955"/>
        <dbReference type="ChEBI" id="CHEBI:61548"/>
        <dbReference type="EC" id="1.1.1.363"/>
    </reaction>
    <physiologicalReaction direction="left-to-right" evidence="4">
        <dbReference type="Rhea" id="RHEA:38216"/>
    </physiologicalReaction>
</comment>
<comment type="catalytic activity">
    <reaction evidence="4">
        <text>D-glucose 6-phosphate + NADP(+) = 6-phospho-D-glucono-1,5-lactone + NADPH + H(+)</text>
        <dbReference type="Rhea" id="RHEA:15841"/>
        <dbReference type="ChEBI" id="CHEBI:15378"/>
        <dbReference type="ChEBI" id="CHEBI:57783"/>
        <dbReference type="ChEBI" id="CHEBI:57955"/>
        <dbReference type="ChEBI" id="CHEBI:58349"/>
        <dbReference type="ChEBI" id="CHEBI:61548"/>
        <dbReference type="EC" id="1.1.1.363"/>
    </reaction>
    <physiologicalReaction direction="left-to-right" evidence="4">
        <dbReference type="Rhea" id="RHEA:15842"/>
    </physiologicalReaction>
</comment>
<comment type="catalytic activity">
    <reaction evidence="4">
        <text>6-phospho-D-glucono-1,5-lactone + H2O = 6-phospho-D-gluconate + H(+)</text>
        <dbReference type="Rhea" id="RHEA:12556"/>
        <dbReference type="ChEBI" id="CHEBI:15377"/>
        <dbReference type="ChEBI" id="CHEBI:15378"/>
        <dbReference type="ChEBI" id="CHEBI:57955"/>
        <dbReference type="ChEBI" id="CHEBI:58759"/>
        <dbReference type="EC" id="3.1.1.31"/>
    </reaction>
    <physiologicalReaction direction="left-to-right" evidence="4">
        <dbReference type="Rhea" id="RHEA:12557"/>
    </physiologicalReaction>
</comment>
<comment type="catalytic activity">
    <reaction evidence="4">
        <text>2-deoxy-D-glucose 6-phosphate + NAD(+) = 2-deoxy-6-phospho-D-glucono-1,5-lactone + NADH + H(+)</text>
        <dbReference type="Rhea" id="RHEA:62064"/>
        <dbReference type="ChEBI" id="CHEBI:15378"/>
        <dbReference type="ChEBI" id="CHEBI:57540"/>
        <dbReference type="ChEBI" id="CHEBI:57945"/>
        <dbReference type="ChEBI" id="CHEBI:84760"/>
        <dbReference type="ChEBI" id="CHEBI:145420"/>
    </reaction>
    <physiologicalReaction direction="left-to-right" evidence="4">
        <dbReference type="Rhea" id="RHEA:62065"/>
    </physiologicalReaction>
</comment>
<comment type="catalytic activity">
    <reaction evidence="4">
        <text>2-deoxy-D-glucose 6-phosphate + NADP(+) = 2-deoxy-6-phospho-D-glucono-1,5-lactone + NADPH + H(+)</text>
        <dbReference type="Rhea" id="RHEA:62068"/>
        <dbReference type="ChEBI" id="CHEBI:15378"/>
        <dbReference type="ChEBI" id="CHEBI:57783"/>
        <dbReference type="ChEBI" id="CHEBI:58349"/>
        <dbReference type="ChEBI" id="CHEBI:84760"/>
        <dbReference type="ChEBI" id="CHEBI:145420"/>
    </reaction>
    <physiologicalReaction direction="left-to-right" evidence="4">
        <dbReference type="Rhea" id="RHEA:62069"/>
    </physiologicalReaction>
</comment>
<comment type="catalytic activity">
    <reaction evidence="4">
        <text>D-galactose 6-phosphate + NADP(+) = 6-phospho-D-galactono-1,5-lactone + NADPH + H(+)</text>
        <dbReference type="Rhea" id="RHEA:62072"/>
        <dbReference type="ChEBI" id="CHEBI:15378"/>
        <dbReference type="ChEBI" id="CHEBI:57783"/>
        <dbReference type="ChEBI" id="CHEBI:58349"/>
        <dbReference type="ChEBI" id="CHEBI:91004"/>
        <dbReference type="ChEBI" id="CHEBI:145419"/>
    </reaction>
    <physiologicalReaction direction="left-to-right" evidence="4">
        <dbReference type="Rhea" id="RHEA:62073"/>
    </physiologicalReaction>
</comment>
<comment type="catalytic activity">
    <reaction evidence="4">
        <text>D-galactose 6-phosphate + NAD(+) = 6-phospho-D-galactono-1,5-lactone + NADH + H(+)</text>
        <dbReference type="Rhea" id="RHEA:62076"/>
        <dbReference type="ChEBI" id="CHEBI:15378"/>
        <dbReference type="ChEBI" id="CHEBI:57540"/>
        <dbReference type="ChEBI" id="CHEBI:57945"/>
        <dbReference type="ChEBI" id="CHEBI:91004"/>
        <dbReference type="ChEBI" id="CHEBI:145419"/>
    </reaction>
    <physiologicalReaction direction="left-to-right" evidence="4">
        <dbReference type="Rhea" id="RHEA:62077"/>
    </physiologicalReaction>
</comment>
<comment type="catalytic activity">
    <reaction evidence="4">
        <text>D-glucosamine 6-phosphate + NADP(+) = 2-amino-2-deoxy-6-phospho-D-glucono-1,5-lactone + NADPH + 2 H(+)</text>
        <dbReference type="Rhea" id="RHEA:62088"/>
        <dbReference type="ChEBI" id="CHEBI:15378"/>
        <dbReference type="ChEBI" id="CHEBI:57783"/>
        <dbReference type="ChEBI" id="CHEBI:58349"/>
        <dbReference type="ChEBI" id="CHEBI:58725"/>
        <dbReference type="ChEBI" id="CHEBI:145423"/>
    </reaction>
    <physiologicalReaction direction="left-to-right" evidence="4">
        <dbReference type="Rhea" id="RHEA:62089"/>
    </physiologicalReaction>
</comment>
<comment type="catalytic activity">
    <reaction evidence="4">
        <text>D-glucose + NAD(+) = D-glucono-1,5-lactone + NADH + H(+)</text>
        <dbReference type="Rhea" id="RHEA:14293"/>
        <dbReference type="ChEBI" id="CHEBI:4167"/>
        <dbReference type="ChEBI" id="CHEBI:15378"/>
        <dbReference type="ChEBI" id="CHEBI:16217"/>
        <dbReference type="ChEBI" id="CHEBI:57540"/>
        <dbReference type="ChEBI" id="CHEBI:57945"/>
        <dbReference type="EC" id="1.1.1.47"/>
    </reaction>
    <physiologicalReaction direction="left-to-right" evidence="4">
        <dbReference type="Rhea" id="RHEA:14294"/>
    </physiologicalReaction>
</comment>
<comment type="catalytic activity">
    <reaction evidence="4">
        <text>D-glucose + NADP(+) = D-glucono-1,5-lactone + NADPH + H(+)</text>
        <dbReference type="Rhea" id="RHEA:14405"/>
        <dbReference type="ChEBI" id="CHEBI:4167"/>
        <dbReference type="ChEBI" id="CHEBI:15378"/>
        <dbReference type="ChEBI" id="CHEBI:16217"/>
        <dbReference type="ChEBI" id="CHEBI:57783"/>
        <dbReference type="ChEBI" id="CHEBI:58349"/>
        <dbReference type="EC" id="1.1.1.47"/>
    </reaction>
    <physiologicalReaction direction="left-to-right" evidence="4">
        <dbReference type="Rhea" id="RHEA:14406"/>
    </physiologicalReaction>
</comment>
<comment type="catalytic activity">
    <reaction evidence="4">
        <text>D-glucose 6-sulfate + NADP(+) = 6-sulfo-D-glucono-1,5-lactone + NADPH + H(+)</text>
        <dbReference type="Rhea" id="RHEA:62080"/>
        <dbReference type="ChEBI" id="CHEBI:15378"/>
        <dbReference type="ChEBI" id="CHEBI:57783"/>
        <dbReference type="ChEBI" id="CHEBI:58349"/>
        <dbReference type="ChEBI" id="CHEBI:145424"/>
        <dbReference type="ChEBI" id="CHEBI:145427"/>
    </reaction>
    <physiologicalReaction direction="left-to-right" evidence="4">
        <dbReference type="Rhea" id="RHEA:62081"/>
    </physiologicalReaction>
</comment>
<comment type="pathway">
    <text evidence="4">Carbohydrate degradation; pentose phosphate pathway; D-ribulose 5-phosphate from D-glucose 6-phosphate (oxidative stage).</text>
</comment>
<comment type="pathway">
    <text evidence="4">Carbohydrate degradation; pentose phosphate pathway; D-ribulose 5-phosphate from D-glucose 6-phosphate (oxidative stage): step 2/3.</text>
</comment>
<comment type="subunit">
    <text evidence="4">Homodimer.</text>
</comment>
<comment type="subcellular location">
    <subcellularLocation>
        <location evidence="4">Endoplasmic reticulum lumen</location>
    </subcellularLocation>
</comment>
<comment type="similarity">
    <text evidence="8">In the N-terminal section; belongs to the glucose-6-phosphate dehydrogenase family.</text>
</comment>
<comment type="similarity">
    <text evidence="8">In the C-terminal section; belongs to the glucosamine/galactosamine-6-phosphate isomerase family. 6-phosphogluconolactonase subfamily.</text>
</comment>
<accession>P56201</accession>
<accession>G1SE36</accession>
<keyword id="KW-0119">Carbohydrate metabolism</keyword>
<keyword id="KW-0903">Direct protein sequencing</keyword>
<keyword id="KW-0256">Endoplasmic reticulum</keyword>
<keyword id="KW-0313">Glucose metabolism</keyword>
<keyword id="KW-0325">Glycoprotein</keyword>
<keyword id="KW-0378">Hydrolase</keyword>
<keyword id="KW-0511">Multifunctional enzyme</keyword>
<keyword id="KW-0520">NAD</keyword>
<keyword id="KW-0521">NADP</keyword>
<keyword id="KW-0560">Oxidoreductase</keyword>
<keyword id="KW-0873">Pyrrolidone carboxylic acid</keyword>
<keyword id="KW-1185">Reference proteome</keyword>
<keyword id="KW-0732">Signal</keyword>
<gene>
    <name evidence="1" type="primary">H6PD</name>
</gene>
<feature type="signal peptide" evidence="6">
    <location>
        <begin position="1"/>
        <end position="24"/>
    </location>
</feature>
<feature type="chain" id="PRO_0000068139" description="GDH/6PGL endoplasmic bifunctional protein">
    <location>
        <begin position="25"/>
        <end position="797"/>
    </location>
</feature>
<feature type="region of interest" description="Hexose-6-phosphate dehydrogenase" evidence="8">
    <location>
        <begin position="25"/>
        <end position="531"/>
    </location>
</feature>
<feature type="region of interest" description="Linker" evidence="8">
    <location>
        <begin position="532"/>
        <end position="545"/>
    </location>
</feature>
<feature type="region of interest" description="6-phosphogluconolactonase" evidence="8">
    <location>
        <begin position="546"/>
        <end position="797"/>
    </location>
</feature>
<feature type="active site" description="Proton acceptor" evidence="2">
    <location>
        <position position="272"/>
    </location>
</feature>
<feature type="binding site" evidence="3">
    <location>
        <begin position="37"/>
        <end position="44"/>
    </location>
    <ligand>
        <name>NADP(+)</name>
        <dbReference type="ChEBI" id="CHEBI:58349"/>
        <label>1</label>
    </ligand>
</feature>
<feature type="binding site" evidence="3">
    <location>
        <position position="154"/>
    </location>
    <ligand>
        <name>NADP(+)</name>
        <dbReference type="ChEBI" id="CHEBI:58349"/>
        <label>1</label>
    </ligand>
</feature>
<feature type="binding site" evidence="3">
    <location>
        <position position="179"/>
    </location>
    <ligand>
        <name>D-glucose 6-phosphate</name>
        <dbReference type="ChEBI" id="CHEBI:61548"/>
    </ligand>
</feature>
<feature type="binding site" evidence="3">
    <location>
        <position position="179"/>
    </location>
    <ligand>
        <name>NADP(+)</name>
        <dbReference type="ChEBI" id="CHEBI:58349"/>
        <label>1</label>
    </ligand>
</feature>
<feature type="binding site" evidence="3">
    <location>
        <begin position="209"/>
        <end position="213"/>
    </location>
    <ligand>
        <name>D-glucose 6-phosphate</name>
        <dbReference type="ChEBI" id="CHEBI:61548"/>
    </ligand>
</feature>
<feature type="binding site" evidence="3">
    <location>
        <position position="248"/>
    </location>
    <ligand>
        <name>D-glucose 6-phosphate</name>
        <dbReference type="ChEBI" id="CHEBI:61548"/>
    </ligand>
</feature>
<feature type="binding site" evidence="3">
    <location>
        <position position="267"/>
    </location>
    <ligand>
        <name>D-glucose 6-phosphate</name>
        <dbReference type="ChEBI" id="CHEBI:61548"/>
    </ligand>
</feature>
<feature type="binding site" evidence="3">
    <location>
        <position position="365"/>
    </location>
    <ligand>
        <name>D-glucose 6-phosphate</name>
        <dbReference type="ChEBI" id="CHEBI:61548"/>
    </ligand>
</feature>
<feature type="binding site" evidence="3">
    <location>
        <position position="370"/>
    </location>
    <ligand>
        <name>D-glucose 6-phosphate</name>
        <dbReference type="ChEBI" id="CHEBI:61548"/>
    </ligand>
</feature>
<feature type="binding site" evidence="3">
    <location>
        <position position="375"/>
    </location>
    <ligand>
        <name>NADP(+)</name>
        <dbReference type="ChEBI" id="CHEBI:58349"/>
        <label>2</label>
    </ligand>
</feature>
<feature type="binding site" evidence="3">
    <location>
        <position position="623"/>
    </location>
    <ligand>
        <name>NADP(+)</name>
        <dbReference type="ChEBI" id="CHEBI:58349"/>
        <label>2</label>
    </ligand>
</feature>
<feature type="modified residue" description="Pyrrolidone carboxylic acid" evidence="6">
    <location>
        <position position="25"/>
    </location>
</feature>
<feature type="modified residue" description="N6-succinyllysine" evidence="4">
    <location>
        <position position="213"/>
    </location>
</feature>
<feature type="glycosylation site" description="N-linked (GlcNAc...) asparagine" evidence="5">
    <location>
        <position position="162"/>
    </location>
</feature>
<feature type="glycosylation site" description="N-linked (GlcNAc...) asparagine" evidence="5">
    <location>
        <position position="287"/>
    </location>
</feature>
<feature type="glycosylation site" description="N-linked (GlcNAc...) asparagine" evidence="5">
    <location>
        <position position="689"/>
    </location>
</feature>
<feature type="sequence conflict" description="In Ref. 2; AA sequence." evidence="8" ref="2">
    <original>R</original>
    <variation>L</variation>
    <location>
        <position position="99"/>
    </location>
</feature>
<feature type="sequence conflict" description="In Ref. 2; AA sequence." evidence="8" ref="2">
    <original>R</original>
    <variation>G</variation>
    <location>
        <position position="327"/>
    </location>
</feature>
<feature type="sequence conflict" description="In Ref. 2; AA sequence." evidence="8" ref="2">
    <original>W</original>
    <variation>M</variation>
    <location>
        <position position="354"/>
    </location>
</feature>
<feature type="sequence conflict" description="In Ref. 2; AA sequence." evidence="8" ref="2">
    <original>Q</original>
    <variation>C</variation>
    <location>
        <position position="402"/>
    </location>
</feature>
<feature type="sequence conflict" description="In Ref. 2; AA sequence." evidence="8" ref="2">
    <original>L</original>
    <variation>V</variation>
    <location>
        <position position="418"/>
    </location>
</feature>
<feature type="sequence conflict" description="In Ref. 2; AA sequence." evidence="8" ref="2">
    <location>
        <begin position="617"/>
        <end position="629"/>
    </location>
</feature>
<feature type="sequence conflict" description="In Ref. 2; AA sequence." evidence="8" ref="2">
    <original>Q</original>
    <variation>QA</variation>
    <location>
        <position position="677"/>
    </location>
</feature>
<feature type="sequence conflict" description="In Ref. 2; AA sequence." evidence="8" ref="2">
    <original>N</original>
    <variation>W</variation>
    <location>
        <position position="689"/>
    </location>
</feature>
<feature type="sequence conflict" description="In Ref. 2; AA sequence." evidence="8" ref="2">
    <original>LVLL</original>
    <variation>EVLQ</variation>
    <location>
        <begin position="694"/>
        <end position="697"/>
    </location>
</feature>
<feature type="sequence conflict" description="In Ref. 2; AA sequence." evidence="8" ref="2">
    <original>Q</original>
    <variation>QQR</variation>
    <location>
        <position position="733"/>
    </location>
</feature>
<feature type="sequence conflict" description="In Ref. 2; AA sequence." evidence="8" ref="2">
    <original>K</original>
    <variation>N</variation>
    <location>
        <position position="773"/>
    </location>
</feature>